<name>MURA_HAEDU</name>
<gene>
    <name evidence="1" type="primary">murA</name>
    <name type="ordered locus">HD_0253</name>
</gene>
<proteinExistence type="inferred from homology"/>
<dbReference type="EC" id="2.5.1.7" evidence="1"/>
<dbReference type="EMBL" id="AE017143">
    <property type="protein sequence ID" value="AAP95236.1"/>
    <property type="molecule type" value="Genomic_DNA"/>
</dbReference>
<dbReference type="RefSeq" id="WP_010944289.1">
    <property type="nucleotide sequence ID" value="NC_002940.2"/>
</dbReference>
<dbReference type="SMR" id="Q7VP51"/>
<dbReference type="STRING" id="233412.HD_0253"/>
<dbReference type="KEGG" id="hdu:HD_0253"/>
<dbReference type="eggNOG" id="COG0766">
    <property type="taxonomic scope" value="Bacteria"/>
</dbReference>
<dbReference type="HOGENOM" id="CLU_027387_0_0_6"/>
<dbReference type="OrthoDB" id="9803760at2"/>
<dbReference type="UniPathway" id="UPA00219"/>
<dbReference type="Proteomes" id="UP000001022">
    <property type="component" value="Chromosome"/>
</dbReference>
<dbReference type="GO" id="GO:0005737">
    <property type="term" value="C:cytoplasm"/>
    <property type="evidence" value="ECO:0007669"/>
    <property type="project" value="UniProtKB-SubCell"/>
</dbReference>
<dbReference type="GO" id="GO:0008760">
    <property type="term" value="F:UDP-N-acetylglucosamine 1-carboxyvinyltransferase activity"/>
    <property type="evidence" value="ECO:0007669"/>
    <property type="project" value="UniProtKB-UniRule"/>
</dbReference>
<dbReference type="GO" id="GO:0051301">
    <property type="term" value="P:cell division"/>
    <property type="evidence" value="ECO:0007669"/>
    <property type="project" value="UniProtKB-KW"/>
</dbReference>
<dbReference type="GO" id="GO:0071555">
    <property type="term" value="P:cell wall organization"/>
    <property type="evidence" value="ECO:0007669"/>
    <property type="project" value="UniProtKB-KW"/>
</dbReference>
<dbReference type="GO" id="GO:0009252">
    <property type="term" value="P:peptidoglycan biosynthetic process"/>
    <property type="evidence" value="ECO:0007669"/>
    <property type="project" value="UniProtKB-UniRule"/>
</dbReference>
<dbReference type="GO" id="GO:0008360">
    <property type="term" value="P:regulation of cell shape"/>
    <property type="evidence" value="ECO:0007669"/>
    <property type="project" value="UniProtKB-KW"/>
</dbReference>
<dbReference type="GO" id="GO:0019277">
    <property type="term" value="P:UDP-N-acetylgalactosamine biosynthetic process"/>
    <property type="evidence" value="ECO:0007669"/>
    <property type="project" value="InterPro"/>
</dbReference>
<dbReference type="CDD" id="cd01555">
    <property type="entry name" value="UdpNAET"/>
    <property type="match status" value="1"/>
</dbReference>
<dbReference type="FunFam" id="3.65.10.10:FF:000002">
    <property type="entry name" value="UDP-N-acetylglucosamine 1-carboxyvinyltransferase"/>
    <property type="match status" value="1"/>
</dbReference>
<dbReference type="Gene3D" id="3.65.10.10">
    <property type="entry name" value="Enolpyruvate transferase domain"/>
    <property type="match status" value="2"/>
</dbReference>
<dbReference type="HAMAP" id="MF_00111">
    <property type="entry name" value="MurA"/>
    <property type="match status" value="1"/>
</dbReference>
<dbReference type="InterPro" id="IPR001986">
    <property type="entry name" value="Enolpyruvate_Tfrase_dom"/>
</dbReference>
<dbReference type="InterPro" id="IPR036968">
    <property type="entry name" value="Enolpyruvate_Tfrase_sf"/>
</dbReference>
<dbReference type="InterPro" id="IPR050068">
    <property type="entry name" value="MurA_subfamily"/>
</dbReference>
<dbReference type="InterPro" id="IPR013792">
    <property type="entry name" value="RNA3'P_cycl/enolpyr_Trfase_a/b"/>
</dbReference>
<dbReference type="InterPro" id="IPR005750">
    <property type="entry name" value="UDP_GlcNAc_COvinyl_MurA"/>
</dbReference>
<dbReference type="NCBIfam" id="TIGR01072">
    <property type="entry name" value="murA"/>
    <property type="match status" value="1"/>
</dbReference>
<dbReference type="NCBIfam" id="NF006873">
    <property type="entry name" value="PRK09369.1"/>
    <property type="match status" value="1"/>
</dbReference>
<dbReference type="PANTHER" id="PTHR43783">
    <property type="entry name" value="UDP-N-ACETYLGLUCOSAMINE 1-CARBOXYVINYLTRANSFERASE"/>
    <property type="match status" value="1"/>
</dbReference>
<dbReference type="PANTHER" id="PTHR43783:SF1">
    <property type="entry name" value="UDP-N-ACETYLGLUCOSAMINE 1-CARBOXYVINYLTRANSFERASE"/>
    <property type="match status" value="1"/>
</dbReference>
<dbReference type="Pfam" id="PF00275">
    <property type="entry name" value="EPSP_synthase"/>
    <property type="match status" value="1"/>
</dbReference>
<dbReference type="SUPFAM" id="SSF55205">
    <property type="entry name" value="EPT/RTPC-like"/>
    <property type="match status" value="1"/>
</dbReference>
<sequence length="426" mass="46013">MEKFRVHGPYKLSGTVDISGAKNAALPILFATILAEEPISLTNVPDLKDVDTTFKILRKLGVVIERDANGVVQIDASHIQHYVAPYELVKTMRASIWALAPLVARFHQGQVSLPGGCTIGARPVDMHITSLEKMGAIIELDEGYVKATANGRLQGARIYMDKVSVGATLSVMMAATLAEGSTIIENAAREPEIVDTAHFLNAMGAEISGAGTDTITIKGKERLTGCQHHIVADRIETGTFLVAAAISGGKITCQGTKADTLDAVIEKLREAGMEVTVTENSITLDTKGQRPKAVNIRTMPHPGFPTDMQAQFTLLNAVAEGTSRITETIFENRFMHIPELNRMGAKAEIEGNTAICQGVEQLKPAEVMATDLRASISLVLAGCIASGETIVDRIYHIDRGYEHIEEKLRRIGAKIERFRESASSAE</sequence>
<protein>
    <recommendedName>
        <fullName evidence="1">UDP-N-acetylglucosamine 1-carboxyvinyltransferase</fullName>
        <ecNumber evidence="1">2.5.1.7</ecNumber>
    </recommendedName>
    <alternativeName>
        <fullName evidence="1">Enoylpyruvate transferase</fullName>
    </alternativeName>
    <alternativeName>
        <fullName evidence="1">UDP-N-acetylglucosamine enolpyruvyl transferase</fullName>
        <shortName evidence="1">EPT</shortName>
    </alternativeName>
</protein>
<evidence type="ECO:0000255" key="1">
    <source>
        <dbReference type="HAMAP-Rule" id="MF_00111"/>
    </source>
</evidence>
<feature type="chain" id="PRO_0000178875" description="UDP-N-acetylglucosamine 1-carboxyvinyltransferase">
    <location>
        <begin position="1"/>
        <end position="426"/>
    </location>
</feature>
<feature type="active site" description="Proton donor" evidence="1">
    <location>
        <position position="117"/>
    </location>
</feature>
<feature type="binding site" evidence="1">
    <location>
        <begin position="22"/>
        <end position="23"/>
    </location>
    <ligand>
        <name>phosphoenolpyruvate</name>
        <dbReference type="ChEBI" id="CHEBI:58702"/>
    </ligand>
</feature>
<feature type="binding site" evidence="1">
    <location>
        <position position="93"/>
    </location>
    <ligand>
        <name>UDP-N-acetyl-alpha-D-glucosamine</name>
        <dbReference type="ChEBI" id="CHEBI:57705"/>
    </ligand>
</feature>
<feature type="binding site" evidence="1">
    <location>
        <begin position="162"/>
        <end position="165"/>
    </location>
    <ligand>
        <name>UDP-N-acetyl-alpha-D-glucosamine</name>
        <dbReference type="ChEBI" id="CHEBI:57705"/>
    </ligand>
</feature>
<feature type="binding site" evidence="1">
    <location>
        <position position="307"/>
    </location>
    <ligand>
        <name>UDP-N-acetyl-alpha-D-glucosamine</name>
        <dbReference type="ChEBI" id="CHEBI:57705"/>
    </ligand>
</feature>
<feature type="binding site" evidence="1">
    <location>
        <position position="329"/>
    </location>
    <ligand>
        <name>UDP-N-acetyl-alpha-D-glucosamine</name>
        <dbReference type="ChEBI" id="CHEBI:57705"/>
    </ligand>
</feature>
<feature type="modified residue" description="2-(S-cysteinyl)pyruvic acid O-phosphothioketal" evidence="1">
    <location>
        <position position="117"/>
    </location>
</feature>
<accession>Q7VP51</accession>
<keyword id="KW-0131">Cell cycle</keyword>
<keyword id="KW-0132">Cell division</keyword>
<keyword id="KW-0133">Cell shape</keyword>
<keyword id="KW-0961">Cell wall biogenesis/degradation</keyword>
<keyword id="KW-0963">Cytoplasm</keyword>
<keyword id="KW-0573">Peptidoglycan synthesis</keyword>
<keyword id="KW-0670">Pyruvate</keyword>
<keyword id="KW-1185">Reference proteome</keyword>
<keyword id="KW-0808">Transferase</keyword>
<organism>
    <name type="scientific">Haemophilus ducreyi (strain 35000HP / ATCC 700724)</name>
    <dbReference type="NCBI Taxonomy" id="233412"/>
    <lineage>
        <taxon>Bacteria</taxon>
        <taxon>Pseudomonadati</taxon>
        <taxon>Pseudomonadota</taxon>
        <taxon>Gammaproteobacteria</taxon>
        <taxon>Pasteurellales</taxon>
        <taxon>Pasteurellaceae</taxon>
        <taxon>Haemophilus</taxon>
    </lineage>
</organism>
<reference key="1">
    <citation type="submission" date="2003-06" db="EMBL/GenBank/DDBJ databases">
        <title>The complete genome sequence of Haemophilus ducreyi.</title>
        <authorList>
            <person name="Munson R.S. Jr."/>
            <person name="Ray W.C."/>
            <person name="Mahairas G."/>
            <person name="Sabo P."/>
            <person name="Mungur R."/>
            <person name="Johnson L."/>
            <person name="Nguyen D."/>
            <person name="Wang J."/>
            <person name="Forst C."/>
            <person name="Hood L."/>
        </authorList>
    </citation>
    <scope>NUCLEOTIDE SEQUENCE [LARGE SCALE GENOMIC DNA]</scope>
    <source>
        <strain>35000HP / ATCC 700724</strain>
    </source>
</reference>
<comment type="function">
    <text evidence="1">Cell wall formation. Adds enolpyruvyl to UDP-N-acetylglucosamine.</text>
</comment>
<comment type="catalytic activity">
    <reaction evidence="1">
        <text>phosphoenolpyruvate + UDP-N-acetyl-alpha-D-glucosamine = UDP-N-acetyl-3-O-(1-carboxyvinyl)-alpha-D-glucosamine + phosphate</text>
        <dbReference type="Rhea" id="RHEA:18681"/>
        <dbReference type="ChEBI" id="CHEBI:43474"/>
        <dbReference type="ChEBI" id="CHEBI:57705"/>
        <dbReference type="ChEBI" id="CHEBI:58702"/>
        <dbReference type="ChEBI" id="CHEBI:68483"/>
        <dbReference type="EC" id="2.5.1.7"/>
    </reaction>
</comment>
<comment type="pathway">
    <text evidence="1">Cell wall biogenesis; peptidoglycan biosynthesis.</text>
</comment>
<comment type="subcellular location">
    <subcellularLocation>
        <location evidence="1">Cytoplasm</location>
    </subcellularLocation>
</comment>
<comment type="similarity">
    <text evidence="1">Belongs to the EPSP synthase family. MurA subfamily.</text>
</comment>